<proteinExistence type="inferred from homology"/>
<feature type="chain" id="PRO_0000088587" description="Photosystem I P700 chlorophyll a apoprotein A1">
    <location>
        <begin position="1" status="less than"/>
        <end position="699"/>
    </location>
</feature>
<feature type="transmembrane region" description="Helical; Name=I" evidence="2">
    <location>
        <begin position="15"/>
        <end position="38"/>
    </location>
</feature>
<feature type="transmembrane region" description="Helical; Name=II" evidence="2">
    <location>
        <begin position="104"/>
        <end position="127"/>
    </location>
</feature>
<feature type="transmembrane region" description="Helical; Name=III" evidence="2">
    <location>
        <begin position="143"/>
        <end position="167"/>
    </location>
</feature>
<feature type="transmembrane region" description="Helical; Name=IV" evidence="2">
    <location>
        <begin position="238"/>
        <end position="256"/>
    </location>
</feature>
<feature type="transmembrane region" description="Helical; Name=V" evidence="2">
    <location>
        <begin position="295"/>
        <end position="318"/>
    </location>
</feature>
<feature type="transmembrane region" description="Helical; Name=VI" evidence="2">
    <location>
        <begin position="334"/>
        <end position="360"/>
    </location>
</feature>
<feature type="transmembrane region" description="Helical; Name=VII" evidence="2">
    <location>
        <begin position="382"/>
        <end position="404"/>
    </location>
</feature>
<feature type="transmembrane region" description="Helical; Name=VIII" evidence="2">
    <location>
        <begin position="480"/>
        <end position="498"/>
    </location>
</feature>
<feature type="transmembrane region" description="Helical; Name=IX" evidence="2">
    <location>
        <begin position="538"/>
        <end position="559"/>
    </location>
</feature>
<feature type="transmembrane region" description="Helical; Name=X" evidence="2">
    <location>
        <begin position="613"/>
        <end position="635"/>
    </location>
</feature>
<feature type="transmembrane region" description="Helical; Name=XI" evidence="2">
    <location>
        <begin position="673"/>
        <end position="693"/>
    </location>
</feature>
<feature type="binding site" evidence="1">
    <location>
        <position position="522"/>
    </location>
    <ligand>
        <name>[4Fe-4S] cluster</name>
        <dbReference type="ChEBI" id="CHEBI:49883"/>
        <note>ligand shared between dimeric partners</note>
    </ligand>
</feature>
<feature type="binding site" evidence="1">
    <location>
        <position position="531"/>
    </location>
    <ligand>
        <name>[4Fe-4S] cluster</name>
        <dbReference type="ChEBI" id="CHEBI:49883"/>
        <note>ligand shared between dimeric partners</note>
    </ligand>
</feature>
<feature type="binding site" description="axial binding residue" evidence="1">
    <location>
        <position position="624"/>
    </location>
    <ligand>
        <name>chlorophyll a'</name>
        <dbReference type="ChEBI" id="CHEBI:189419"/>
        <label>A1</label>
    </ligand>
    <ligandPart>
        <name>Mg</name>
        <dbReference type="ChEBI" id="CHEBI:25107"/>
    </ligandPart>
</feature>
<feature type="binding site" description="axial binding residue" evidence="1">
    <location>
        <position position="632"/>
    </location>
    <ligand>
        <name>chlorophyll a</name>
        <dbReference type="ChEBI" id="CHEBI:58416"/>
        <label>A3</label>
    </ligand>
    <ligandPart>
        <name>Mg</name>
        <dbReference type="ChEBI" id="CHEBI:25107"/>
    </ligandPart>
</feature>
<feature type="binding site" evidence="1">
    <location>
        <position position="640"/>
    </location>
    <ligand>
        <name>chlorophyll a</name>
        <dbReference type="ChEBI" id="CHEBI:58416"/>
        <label>A3</label>
    </ligand>
</feature>
<feature type="binding site" evidence="1">
    <location>
        <position position="641"/>
    </location>
    <ligand>
        <name>phylloquinone</name>
        <dbReference type="ChEBI" id="CHEBI:18067"/>
        <label>A</label>
    </ligand>
</feature>
<feature type="non-terminal residue">
    <location>
        <position position="1"/>
    </location>
</feature>
<gene>
    <name type="primary">psaA</name>
</gene>
<protein>
    <recommendedName>
        <fullName>Photosystem I P700 chlorophyll a apoprotein A1</fullName>
        <ecNumber>1.97.1.12</ecNumber>
    </recommendedName>
    <alternativeName>
        <fullName>PsaA</fullName>
    </alternativeName>
</protein>
<evidence type="ECO:0000250" key="1"/>
<evidence type="ECO:0000255" key="2"/>
<evidence type="ECO:0000305" key="3"/>
<reference key="1">
    <citation type="submission" date="2001-02" db="EMBL/GenBank/DDBJ databases">
        <title>Structural variability in the psaA/psaB proteins of Prochlorothrix.</title>
        <authorList>
            <person name="Mychkin E."/>
            <person name="Bullerjahn G.S."/>
        </authorList>
    </citation>
    <scope>NUCLEOTIDE SEQUENCE [GENOMIC DNA]</scope>
</reference>
<reference key="2">
    <citation type="unpublished observations" date="2001-10">
        <authorList>
            <person name="Bullerjahn G.S."/>
        </authorList>
    </citation>
    <scope>SEQUENCE REVISION TO 624</scope>
</reference>
<dbReference type="EC" id="1.97.1.12"/>
<dbReference type="EMBL" id="AY026898">
    <property type="protein sequence ID" value="AAK08970.1"/>
    <property type="status" value="ALT_SEQ"/>
    <property type="molecule type" value="Genomic_DNA"/>
</dbReference>
<dbReference type="SMR" id="Q9AL93"/>
<dbReference type="GO" id="GO:0009522">
    <property type="term" value="C:photosystem I"/>
    <property type="evidence" value="ECO:0007669"/>
    <property type="project" value="UniProtKB-KW"/>
</dbReference>
<dbReference type="GO" id="GO:0031676">
    <property type="term" value="C:plasma membrane-derived thylakoid membrane"/>
    <property type="evidence" value="ECO:0007669"/>
    <property type="project" value="UniProtKB-SubCell"/>
</dbReference>
<dbReference type="GO" id="GO:0051539">
    <property type="term" value="F:4 iron, 4 sulfur cluster binding"/>
    <property type="evidence" value="ECO:0007669"/>
    <property type="project" value="UniProtKB-KW"/>
</dbReference>
<dbReference type="GO" id="GO:0016168">
    <property type="term" value="F:chlorophyll binding"/>
    <property type="evidence" value="ECO:0007669"/>
    <property type="project" value="UniProtKB-KW"/>
</dbReference>
<dbReference type="GO" id="GO:0046872">
    <property type="term" value="F:metal ion binding"/>
    <property type="evidence" value="ECO:0007669"/>
    <property type="project" value="UniProtKB-KW"/>
</dbReference>
<dbReference type="GO" id="GO:0016491">
    <property type="term" value="F:oxidoreductase activity"/>
    <property type="evidence" value="ECO:0007669"/>
    <property type="project" value="UniProtKB-KW"/>
</dbReference>
<dbReference type="GO" id="GO:0015979">
    <property type="term" value="P:photosynthesis"/>
    <property type="evidence" value="ECO:0007669"/>
    <property type="project" value="UniProtKB-KW"/>
</dbReference>
<dbReference type="Gene3D" id="1.20.1130.10">
    <property type="entry name" value="Photosystem I PsaA/PsaB"/>
    <property type="match status" value="1"/>
</dbReference>
<dbReference type="InterPro" id="IPR006243">
    <property type="entry name" value="PSI_PsaA"/>
</dbReference>
<dbReference type="InterPro" id="IPR001280">
    <property type="entry name" value="PSI_PsaA/B"/>
</dbReference>
<dbReference type="InterPro" id="IPR020586">
    <property type="entry name" value="PSI_PsaA/B_CS"/>
</dbReference>
<dbReference type="InterPro" id="IPR036408">
    <property type="entry name" value="PSI_PsaA/B_sf"/>
</dbReference>
<dbReference type="NCBIfam" id="TIGR01335">
    <property type="entry name" value="psaA"/>
    <property type="match status" value="1"/>
</dbReference>
<dbReference type="PANTHER" id="PTHR30128">
    <property type="entry name" value="OUTER MEMBRANE PROTEIN, OMPA-RELATED"/>
    <property type="match status" value="1"/>
</dbReference>
<dbReference type="PANTHER" id="PTHR30128:SF19">
    <property type="entry name" value="PHOTOSYSTEM I P700 CHLOROPHYLL A APOPROTEIN A1-RELATED"/>
    <property type="match status" value="1"/>
</dbReference>
<dbReference type="Pfam" id="PF00223">
    <property type="entry name" value="PsaA_PsaB"/>
    <property type="match status" value="1"/>
</dbReference>
<dbReference type="PIRSF" id="PIRSF002905">
    <property type="entry name" value="PSI_A"/>
    <property type="match status" value="1"/>
</dbReference>
<dbReference type="PRINTS" id="PR00257">
    <property type="entry name" value="PHOTSYSPSAAB"/>
</dbReference>
<dbReference type="SUPFAM" id="SSF81558">
    <property type="entry name" value="Photosystem I subunits PsaA/PsaB"/>
    <property type="match status" value="1"/>
</dbReference>
<dbReference type="PROSITE" id="PS00419">
    <property type="entry name" value="PHOTOSYSTEM_I_PSAAB"/>
    <property type="match status" value="1"/>
</dbReference>
<sequence length="699" mass="76532">FDSHTSDLEDVSRKIFSAHFGHLAVIFIWLSGAYFHGARFSNYTAWLSDPISIKPSAQVVWPFRSIFGQEILNGDVGGGFHGIQITSGLFHLWRACGITHSSELYATAIGALVMAGLMLFAGWFHYHKAAPKLEWFQNVESMLNHHLSVLLGCGSLGWAGHLIHISLPVNALLDAGVSPADIPLAKDYVLDAGYMAKFSQLCRGLNPFFTLNWGVYSDFLTFKGGLNPQTGSLWLTDIAHHQLAIAVLFIIAGHMYRTNWGIGHDMKALLDGHKGPVGEVGTGHAGLYEILTTSWHAQLAINLALLGSLSIIVAHHMYAMPPYPYLAIDYPTQLSLFTHHVWIGGFLIVGAGAHAAIFMIRDYDPAKNVDNLLDRVIRHRDAIISHLNWVCIWLGFHSFGLYIHNDTMRALGRPQDMFSDSAIQLQPIFAQGIQSIQAAVAGSAQAPWVGAATSPVWGGDTIAVGGKVAMSAIPLGTADFMVHHIHAFTIHVTVLILLKGVLYARNSRLVPDKAELGFAFPCDGPGRGGTCQVSAWDHVFLGLFWMYNSLSIVIFHFSWKMQSDVWGTVYPDGSVLNITVGNFAESALTINGRLRDFLWAQAASVINSYGSALSAYGLMFLAAHFVWAFSLMFLFSGRGYWQELIESIVWAHNKLKVAPAIQPRALSITQGRAVGVAHYLLGGIATTWAFFLARIISVG</sequence>
<accession>Q9AL93</accession>
<name>PSAA_PROHO</name>
<comment type="function">
    <text evidence="1">PsaA and PsaB bind P700, the primary electron donor of photosystem I (PSI), as well as the electron acceptors A0, A1 and FX. PSI is a plastocyanin/cytochrome c6-ferredoxin oxidoreductase, converting photonic excitation into a charge separation, which transfers an electron from the donor P700 chlorophyll pair to the spectroscopically characterized acceptors A0, A1, FX, FA and FB in turn. Oxidized P700 is reduced on the lumenal side of the thylakoid membrane by plastocyanin or cytochrome c6 (By similarity).</text>
</comment>
<comment type="catalytic activity">
    <reaction>
        <text>reduced [plastocyanin] + hnu + oxidized [2Fe-2S]-[ferredoxin] = oxidized [plastocyanin] + reduced [2Fe-2S]-[ferredoxin]</text>
        <dbReference type="Rhea" id="RHEA:30407"/>
        <dbReference type="Rhea" id="RHEA-COMP:10000"/>
        <dbReference type="Rhea" id="RHEA-COMP:10001"/>
        <dbReference type="Rhea" id="RHEA-COMP:10039"/>
        <dbReference type="Rhea" id="RHEA-COMP:10040"/>
        <dbReference type="ChEBI" id="CHEBI:29036"/>
        <dbReference type="ChEBI" id="CHEBI:30212"/>
        <dbReference type="ChEBI" id="CHEBI:33737"/>
        <dbReference type="ChEBI" id="CHEBI:33738"/>
        <dbReference type="ChEBI" id="CHEBI:49552"/>
        <dbReference type="EC" id="1.97.1.12"/>
    </reaction>
</comment>
<comment type="cofactor">
    <text evidence="1">PSI electron transfer chain: 5 chlorophyll a, 1 chlorophyll a', 2 phylloquinones and 3 4Fe-4S clusters. PSI core antenna: 90 chlorophyll a, 22 carotenoids, 3 phospholipids and 1 galactolipid. P700 is a chlorophyll a/chlorophyll a' dimer, A0 is one or more chlorophyll a, A1 is one or both phylloquinones and FX is a shared 4Fe-4S iron-sulfur center.</text>
</comment>
<comment type="subunit">
    <text evidence="1">The PsaA/B heterodimer binds the P700 chlorophyll special pair and subsequent electron acceptors. PSI consists of a core antenna complex that captures photons, and an electron transfer chain that converts photonic excitation into a charge separation. The cyanobacterial PSI reaction center is composed of one copy each of PsaA,B,C,D,E,F,I,J,K,L,M and X, and forms trimeric complexes (By similarity).</text>
</comment>
<comment type="subcellular location">
    <subcellularLocation>
        <location evidence="1">Cellular thylakoid membrane</location>
        <topology evidence="1">Multi-pass membrane protein</topology>
    </subcellularLocation>
</comment>
<comment type="similarity">
    <text evidence="3">Belongs to the PsaA/PsaB family.</text>
</comment>
<organism>
    <name type="scientific">Prochlorothrix hollandica</name>
    <dbReference type="NCBI Taxonomy" id="1223"/>
    <lineage>
        <taxon>Bacteria</taxon>
        <taxon>Bacillati</taxon>
        <taxon>Cyanobacteriota</taxon>
        <taxon>Cyanophyceae</taxon>
        <taxon>Prochlorotrichales</taxon>
        <taxon>Prochlorotrichaceae</taxon>
        <taxon>Prochlorothrix</taxon>
    </lineage>
</organism>
<keyword id="KW-0004">4Fe-4S</keyword>
<keyword id="KW-0148">Chlorophyll</keyword>
<keyword id="KW-0157">Chromophore</keyword>
<keyword id="KW-0249">Electron transport</keyword>
<keyword id="KW-0408">Iron</keyword>
<keyword id="KW-0411">Iron-sulfur</keyword>
<keyword id="KW-0460">Magnesium</keyword>
<keyword id="KW-0472">Membrane</keyword>
<keyword id="KW-0479">Metal-binding</keyword>
<keyword id="KW-0560">Oxidoreductase</keyword>
<keyword id="KW-0602">Photosynthesis</keyword>
<keyword id="KW-0603">Photosystem I</keyword>
<keyword id="KW-0793">Thylakoid</keyword>
<keyword id="KW-0812">Transmembrane</keyword>
<keyword id="KW-1133">Transmembrane helix</keyword>
<keyword id="KW-0813">Transport</keyword>